<name>RSMH_CHLTA</name>
<gene>
    <name evidence="1" type="primary">rsmH</name>
    <name type="synonym">mraW</name>
    <name type="ordered locus">CTA_0294</name>
</gene>
<comment type="function">
    <text evidence="1">Specifically methylates the N4 position of cytidine in position 1402 (C1402) of 16S rRNA.</text>
</comment>
<comment type="catalytic activity">
    <reaction evidence="1">
        <text>cytidine(1402) in 16S rRNA + S-adenosyl-L-methionine = N(4)-methylcytidine(1402) in 16S rRNA + S-adenosyl-L-homocysteine + H(+)</text>
        <dbReference type="Rhea" id="RHEA:42928"/>
        <dbReference type="Rhea" id="RHEA-COMP:10286"/>
        <dbReference type="Rhea" id="RHEA-COMP:10287"/>
        <dbReference type="ChEBI" id="CHEBI:15378"/>
        <dbReference type="ChEBI" id="CHEBI:57856"/>
        <dbReference type="ChEBI" id="CHEBI:59789"/>
        <dbReference type="ChEBI" id="CHEBI:74506"/>
        <dbReference type="ChEBI" id="CHEBI:82748"/>
        <dbReference type="EC" id="2.1.1.199"/>
    </reaction>
</comment>
<comment type="subcellular location">
    <subcellularLocation>
        <location evidence="1">Cytoplasm</location>
    </subcellularLocation>
</comment>
<comment type="similarity">
    <text evidence="1">Belongs to the methyltransferase superfamily. RsmH family.</text>
</comment>
<sequence length="300" mass="34075">MTDSIPHIPVLVKESLSLFRDRNPVVFCDVTVGAGGHAEAFLTEFPSIERYDGSDRDLSALALSENRLLPFKDRVRLRHASFEEVDTLTSDGTYDGVLADLGVSSMQLNNLERGFSFQGEDHPLDMRMDTSRGMTASEVLNSLREEEIGEIFRNYGEEPLWRSAAAAVVHFRKKKKILTVKDLKDATSGVFPSYRLRKKIHPLTLIFQALRIYVNQEGAQLKVLLDSAFRWLRPGGRLAVISFCSLDDRPVKWAFREAEARGLGKILTKKVIMPSYEETRMNPRSRSAKLRCFEKSFEDK</sequence>
<proteinExistence type="inferred from homology"/>
<feature type="chain" id="PRO_0000223535" description="Ribosomal RNA small subunit methyltransferase H">
    <location>
        <begin position="1"/>
        <end position="300"/>
    </location>
</feature>
<feature type="binding site" evidence="1">
    <location>
        <begin position="35"/>
        <end position="37"/>
    </location>
    <ligand>
        <name>S-adenosyl-L-methionine</name>
        <dbReference type="ChEBI" id="CHEBI:59789"/>
    </ligand>
</feature>
<feature type="binding site" evidence="1">
    <location>
        <position position="55"/>
    </location>
    <ligand>
        <name>S-adenosyl-L-methionine</name>
        <dbReference type="ChEBI" id="CHEBI:59789"/>
    </ligand>
</feature>
<feature type="binding site" evidence="1">
    <location>
        <position position="82"/>
    </location>
    <ligand>
        <name>S-adenosyl-L-methionine</name>
        <dbReference type="ChEBI" id="CHEBI:59789"/>
    </ligand>
</feature>
<feature type="binding site" evidence="1">
    <location>
        <position position="100"/>
    </location>
    <ligand>
        <name>S-adenosyl-L-methionine</name>
        <dbReference type="ChEBI" id="CHEBI:59789"/>
    </ligand>
</feature>
<feature type="binding site" evidence="1">
    <location>
        <position position="107"/>
    </location>
    <ligand>
        <name>S-adenosyl-L-methionine</name>
        <dbReference type="ChEBI" id="CHEBI:59789"/>
    </ligand>
</feature>
<dbReference type="EC" id="2.1.1.199" evidence="1"/>
<dbReference type="EMBL" id="CP000051">
    <property type="protein sequence ID" value="AAX50532.1"/>
    <property type="molecule type" value="Genomic_DNA"/>
</dbReference>
<dbReference type="RefSeq" id="WP_009871619.1">
    <property type="nucleotide sequence ID" value="NC_007429.1"/>
</dbReference>
<dbReference type="SMR" id="Q3KM90"/>
<dbReference type="KEGG" id="cta:CTA_0294"/>
<dbReference type="HOGENOM" id="CLU_038422_3_0_0"/>
<dbReference type="Proteomes" id="UP000002532">
    <property type="component" value="Chromosome"/>
</dbReference>
<dbReference type="GO" id="GO:0005737">
    <property type="term" value="C:cytoplasm"/>
    <property type="evidence" value="ECO:0007669"/>
    <property type="project" value="UniProtKB-SubCell"/>
</dbReference>
<dbReference type="GO" id="GO:0071424">
    <property type="term" value="F:rRNA (cytosine-N4-)-methyltransferase activity"/>
    <property type="evidence" value="ECO:0007669"/>
    <property type="project" value="UniProtKB-UniRule"/>
</dbReference>
<dbReference type="GO" id="GO:0070475">
    <property type="term" value="P:rRNA base methylation"/>
    <property type="evidence" value="ECO:0007669"/>
    <property type="project" value="UniProtKB-UniRule"/>
</dbReference>
<dbReference type="FunFam" id="1.10.150.170:FF:000003">
    <property type="entry name" value="Ribosomal RNA small subunit methyltransferase H"/>
    <property type="match status" value="1"/>
</dbReference>
<dbReference type="Gene3D" id="1.10.150.170">
    <property type="entry name" value="Putative methyltransferase TM0872, insert domain"/>
    <property type="match status" value="1"/>
</dbReference>
<dbReference type="Gene3D" id="3.40.50.150">
    <property type="entry name" value="Vaccinia Virus protein VP39"/>
    <property type="match status" value="1"/>
</dbReference>
<dbReference type="HAMAP" id="MF_01007">
    <property type="entry name" value="16SrRNA_methyltr_H"/>
    <property type="match status" value="1"/>
</dbReference>
<dbReference type="InterPro" id="IPR002903">
    <property type="entry name" value="RsmH"/>
</dbReference>
<dbReference type="InterPro" id="IPR023397">
    <property type="entry name" value="SAM-dep_MeTrfase_MraW_recog"/>
</dbReference>
<dbReference type="InterPro" id="IPR029063">
    <property type="entry name" value="SAM-dependent_MTases_sf"/>
</dbReference>
<dbReference type="NCBIfam" id="TIGR00006">
    <property type="entry name" value="16S rRNA (cytosine(1402)-N(4))-methyltransferase RsmH"/>
    <property type="match status" value="1"/>
</dbReference>
<dbReference type="PANTHER" id="PTHR11265:SF0">
    <property type="entry name" value="12S RRNA N4-METHYLCYTIDINE METHYLTRANSFERASE"/>
    <property type="match status" value="1"/>
</dbReference>
<dbReference type="PANTHER" id="PTHR11265">
    <property type="entry name" value="S-ADENOSYL-METHYLTRANSFERASE MRAW"/>
    <property type="match status" value="1"/>
</dbReference>
<dbReference type="Pfam" id="PF01795">
    <property type="entry name" value="Methyltransf_5"/>
    <property type="match status" value="1"/>
</dbReference>
<dbReference type="PIRSF" id="PIRSF004486">
    <property type="entry name" value="MraW"/>
    <property type="match status" value="1"/>
</dbReference>
<dbReference type="SUPFAM" id="SSF81799">
    <property type="entry name" value="Putative methyltransferase TM0872, insert domain"/>
    <property type="match status" value="1"/>
</dbReference>
<dbReference type="SUPFAM" id="SSF53335">
    <property type="entry name" value="S-adenosyl-L-methionine-dependent methyltransferases"/>
    <property type="match status" value="1"/>
</dbReference>
<keyword id="KW-0963">Cytoplasm</keyword>
<keyword id="KW-0489">Methyltransferase</keyword>
<keyword id="KW-0698">rRNA processing</keyword>
<keyword id="KW-0949">S-adenosyl-L-methionine</keyword>
<keyword id="KW-0808">Transferase</keyword>
<organism>
    <name type="scientific">Chlamydia trachomatis serovar A (strain ATCC VR-571B / DSM 19440 / HAR-13)</name>
    <dbReference type="NCBI Taxonomy" id="315277"/>
    <lineage>
        <taxon>Bacteria</taxon>
        <taxon>Pseudomonadati</taxon>
        <taxon>Chlamydiota</taxon>
        <taxon>Chlamydiia</taxon>
        <taxon>Chlamydiales</taxon>
        <taxon>Chlamydiaceae</taxon>
        <taxon>Chlamydia/Chlamydophila group</taxon>
        <taxon>Chlamydia</taxon>
    </lineage>
</organism>
<evidence type="ECO:0000255" key="1">
    <source>
        <dbReference type="HAMAP-Rule" id="MF_01007"/>
    </source>
</evidence>
<protein>
    <recommendedName>
        <fullName evidence="1">Ribosomal RNA small subunit methyltransferase H</fullName>
        <ecNumber evidence="1">2.1.1.199</ecNumber>
    </recommendedName>
    <alternativeName>
        <fullName evidence="1">16S rRNA m(4)C1402 methyltransferase</fullName>
    </alternativeName>
    <alternativeName>
        <fullName evidence="1">rRNA (cytosine-N(4)-)-methyltransferase RsmH</fullName>
    </alternativeName>
</protein>
<accession>Q3KM90</accession>
<reference key="1">
    <citation type="journal article" date="2005" name="Infect. Immun.">
        <title>Comparative genomic analysis of Chlamydia trachomatis oculotropic and genitotropic strains.</title>
        <authorList>
            <person name="Carlson J.H."/>
            <person name="Porcella S.F."/>
            <person name="McClarty G."/>
            <person name="Caldwell H.D."/>
        </authorList>
    </citation>
    <scope>NUCLEOTIDE SEQUENCE [LARGE SCALE GENOMIC DNA]</scope>
    <source>
        <strain>ATCC VR-571B / DSM 19440 / HAR-13</strain>
    </source>
</reference>